<reference key="1">
    <citation type="journal article" date="2009" name="BMC Genomics">
        <title>Genome evolution driven by host adaptations results in a more virulent and antimicrobial-resistant Streptococcus pneumoniae serotype 14.</title>
        <authorList>
            <person name="Ding F."/>
            <person name="Tang P."/>
            <person name="Hsu M.-H."/>
            <person name="Cui P."/>
            <person name="Hu S."/>
            <person name="Yu J."/>
            <person name="Chiu C.-H."/>
        </authorList>
    </citation>
    <scope>NUCLEOTIDE SEQUENCE [LARGE SCALE GENOMIC DNA]</scope>
    <source>
        <strain>CGSP14</strain>
    </source>
</reference>
<evidence type="ECO:0000255" key="1">
    <source>
        <dbReference type="HAMAP-Rule" id="MF_01615"/>
    </source>
</evidence>
<proteinExistence type="inferred from homology"/>
<accession>B2IQT4</accession>
<keyword id="KW-0315">Glutamine amidotransferase</keyword>
<keyword id="KW-0378">Hydrolase</keyword>
<keyword id="KW-0456">Lyase</keyword>
<keyword id="KW-0663">Pyridoxal phosphate</keyword>
<comment type="function">
    <text evidence="1">Catalyzes the hydrolysis of glutamine to glutamate and ammonia as part of the biosynthesis of pyridoxal 5'-phosphate. The resulting ammonia molecule is channeled to the active site of PdxS.</text>
</comment>
<comment type="catalytic activity">
    <reaction evidence="1">
        <text>aldehydo-D-ribose 5-phosphate + D-glyceraldehyde 3-phosphate + L-glutamine = pyridoxal 5'-phosphate + L-glutamate + phosphate + 3 H2O + H(+)</text>
        <dbReference type="Rhea" id="RHEA:31507"/>
        <dbReference type="ChEBI" id="CHEBI:15377"/>
        <dbReference type="ChEBI" id="CHEBI:15378"/>
        <dbReference type="ChEBI" id="CHEBI:29985"/>
        <dbReference type="ChEBI" id="CHEBI:43474"/>
        <dbReference type="ChEBI" id="CHEBI:58273"/>
        <dbReference type="ChEBI" id="CHEBI:58359"/>
        <dbReference type="ChEBI" id="CHEBI:59776"/>
        <dbReference type="ChEBI" id="CHEBI:597326"/>
        <dbReference type="EC" id="4.3.3.6"/>
    </reaction>
</comment>
<comment type="catalytic activity">
    <reaction evidence="1">
        <text>L-glutamine + H2O = L-glutamate + NH4(+)</text>
        <dbReference type="Rhea" id="RHEA:15889"/>
        <dbReference type="ChEBI" id="CHEBI:15377"/>
        <dbReference type="ChEBI" id="CHEBI:28938"/>
        <dbReference type="ChEBI" id="CHEBI:29985"/>
        <dbReference type="ChEBI" id="CHEBI:58359"/>
        <dbReference type="EC" id="3.5.1.2"/>
    </reaction>
</comment>
<comment type="pathway">
    <text evidence="1">Cofactor biosynthesis; pyridoxal 5'-phosphate biosynthesis.</text>
</comment>
<comment type="subunit">
    <text evidence="1">In the presence of PdxS, forms a dodecamer of heterodimers. Only shows activity in the heterodimer.</text>
</comment>
<comment type="similarity">
    <text evidence="1">Belongs to the glutaminase PdxT/SNO family.</text>
</comment>
<name>PDXT_STRPS</name>
<dbReference type="EC" id="4.3.3.6" evidence="1"/>
<dbReference type="EC" id="3.5.1.2" evidence="1"/>
<dbReference type="EMBL" id="CP001033">
    <property type="protein sequence ID" value="ACB90708.1"/>
    <property type="molecule type" value="Genomic_DNA"/>
</dbReference>
<dbReference type="RefSeq" id="WP_000689942.1">
    <property type="nucleotide sequence ID" value="NC_010582.1"/>
</dbReference>
<dbReference type="SMR" id="B2IQT4"/>
<dbReference type="MEROPS" id="C26.A32"/>
<dbReference type="KEGG" id="spw:SPCG_1456"/>
<dbReference type="HOGENOM" id="CLU_069674_2_0_9"/>
<dbReference type="UniPathway" id="UPA00245"/>
<dbReference type="GO" id="GO:0005829">
    <property type="term" value="C:cytosol"/>
    <property type="evidence" value="ECO:0007669"/>
    <property type="project" value="TreeGrafter"/>
</dbReference>
<dbReference type="GO" id="GO:1903600">
    <property type="term" value="C:glutaminase complex"/>
    <property type="evidence" value="ECO:0007669"/>
    <property type="project" value="TreeGrafter"/>
</dbReference>
<dbReference type="GO" id="GO:0004359">
    <property type="term" value="F:glutaminase activity"/>
    <property type="evidence" value="ECO:0007669"/>
    <property type="project" value="UniProtKB-UniRule"/>
</dbReference>
<dbReference type="GO" id="GO:0036381">
    <property type="term" value="F:pyridoxal 5'-phosphate synthase (glutamine hydrolysing) activity"/>
    <property type="evidence" value="ECO:0007669"/>
    <property type="project" value="UniProtKB-UniRule"/>
</dbReference>
<dbReference type="GO" id="GO:0006543">
    <property type="term" value="P:glutamine catabolic process"/>
    <property type="evidence" value="ECO:0007669"/>
    <property type="project" value="UniProtKB-UniRule"/>
</dbReference>
<dbReference type="GO" id="GO:0042823">
    <property type="term" value="P:pyridoxal phosphate biosynthetic process"/>
    <property type="evidence" value="ECO:0007669"/>
    <property type="project" value="UniProtKB-UniRule"/>
</dbReference>
<dbReference type="GO" id="GO:0008614">
    <property type="term" value="P:pyridoxine metabolic process"/>
    <property type="evidence" value="ECO:0007669"/>
    <property type="project" value="TreeGrafter"/>
</dbReference>
<dbReference type="CDD" id="cd01749">
    <property type="entry name" value="GATase1_PB"/>
    <property type="match status" value="1"/>
</dbReference>
<dbReference type="FunFam" id="3.40.50.880:FF:000010">
    <property type="entry name" value="uncharacterized protein LOC100176842 isoform X2"/>
    <property type="match status" value="1"/>
</dbReference>
<dbReference type="Gene3D" id="3.40.50.880">
    <property type="match status" value="1"/>
</dbReference>
<dbReference type="HAMAP" id="MF_01615">
    <property type="entry name" value="PdxT"/>
    <property type="match status" value="1"/>
</dbReference>
<dbReference type="InterPro" id="IPR029062">
    <property type="entry name" value="Class_I_gatase-like"/>
</dbReference>
<dbReference type="InterPro" id="IPR002161">
    <property type="entry name" value="PdxT/SNO"/>
</dbReference>
<dbReference type="InterPro" id="IPR021196">
    <property type="entry name" value="PdxT/SNO_CS"/>
</dbReference>
<dbReference type="NCBIfam" id="TIGR03800">
    <property type="entry name" value="PLP_synth_Pdx2"/>
    <property type="match status" value="1"/>
</dbReference>
<dbReference type="PANTHER" id="PTHR31559">
    <property type="entry name" value="PYRIDOXAL 5'-PHOSPHATE SYNTHASE SUBUNIT SNO"/>
    <property type="match status" value="1"/>
</dbReference>
<dbReference type="PANTHER" id="PTHR31559:SF0">
    <property type="entry name" value="PYRIDOXAL 5'-PHOSPHATE SYNTHASE SUBUNIT SNO1-RELATED"/>
    <property type="match status" value="1"/>
</dbReference>
<dbReference type="Pfam" id="PF01174">
    <property type="entry name" value="SNO"/>
    <property type="match status" value="1"/>
</dbReference>
<dbReference type="PIRSF" id="PIRSF005639">
    <property type="entry name" value="Glut_amidoT_SNO"/>
    <property type="match status" value="1"/>
</dbReference>
<dbReference type="SUPFAM" id="SSF52317">
    <property type="entry name" value="Class I glutamine amidotransferase-like"/>
    <property type="match status" value="1"/>
</dbReference>
<dbReference type="PROSITE" id="PS01236">
    <property type="entry name" value="PDXT_SNO_1"/>
    <property type="match status" value="1"/>
</dbReference>
<dbReference type="PROSITE" id="PS51130">
    <property type="entry name" value="PDXT_SNO_2"/>
    <property type="match status" value="1"/>
</dbReference>
<gene>
    <name evidence="1" type="primary">pdxT</name>
    <name type="ordered locus">SPCG_1456</name>
</gene>
<organism>
    <name type="scientific">Streptococcus pneumoniae (strain CGSP14)</name>
    <dbReference type="NCBI Taxonomy" id="516950"/>
    <lineage>
        <taxon>Bacteria</taxon>
        <taxon>Bacillati</taxon>
        <taxon>Bacillota</taxon>
        <taxon>Bacilli</taxon>
        <taxon>Lactobacillales</taxon>
        <taxon>Streptococcaceae</taxon>
        <taxon>Streptococcus</taxon>
    </lineage>
</organism>
<sequence>MKIGILALQGAFAEHAKVLDQLGVESVELRNLDDFQQDQSDLSGLILPGGESTTMGKLLRDQNMLLPIREAILSGLPVFGTCAGLILLAKEITSQKESHLGTMDMVVERNAYGRQLGSFYTEAECKGVGKIPMTFIRGPIISSVGEDVEILATVDNQIVAAQEKNMLVTSFHPELTDDAHLHQYFIEMCKEKRQ</sequence>
<feature type="chain" id="PRO_1000215720" description="Pyridoxal 5'-phosphate synthase subunit PdxT">
    <location>
        <begin position="1"/>
        <end position="194"/>
    </location>
</feature>
<feature type="active site" description="Nucleophile" evidence="1">
    <location>
        <position position="82"/>
    </location>
</feature>
<feature type="active site" description="Charge relay system" evidence="1">
    <location>
        <position position="172"/>
    </location>
</feature>
<feature type="active site" description="Charge relay system" evidence="1">
    <location>
        <position position="174"/>
    </location>
</feature>
<feature type="binding site" evidence="1">
    <location>
        <begin position="50"/>
        <end position="52"/>
    </location>
    <ligand>
        <name>L-glutamine</name>
        <dbReference type="ChEBI" id="CHEBI:58359"/>
    </ligand>
</feature>
<feature type="binding site" evidence="1">
    <location>
        <position position="109"/>
    </location>
    <ligand>
        <name>L-glutamine</name>
        <dbReference type="ChEBI" id="CHEBI:58359"/>
    </ligand>
</feature>
<feature type="binding site" evidence="1">
    <location>
        <begin position="136"/>
        <end position="137"/>
    </location>
    <ligand>
        <name>L-glutamine</name>
        <dbReference type="ChEBI" id="CHEBI:58359"/>
    </ligand>
</feature>
<protein>
    <recommendedName>
        <fullName evidence="1">Pyridoxal 5'-phosphate synthase subunit PdxT</fullName>
        <ecNumber evidence="1">4.3.3.6</ecNumber>
    </recommendedName>
    <alternativeName>
        <fullName evidence="1">Pdx2</fullName>
    </alternativeName>
    <alternativeName>
        <fullName evidence="1">Pyridoxal 5'-phosphate synthase glutaminase subunit</fullName>
        <ecNumber evidence="1">3.5.1.2</ecNumber>
    </alternativeName>
</protein>